<name>Y2026_YERE8</name>
<reference key="1">
    <citation type="journal article" date="2006" name="PLoS Genet.">
        <title>The complete genome sequence and comparative genome analysis of the high pathogenicity Yersinia enterocolitica strain 8081.</title>
        <authorList>
            <person name="Thomson N.R."/>
            <person name="Howard S."/>
            <person name="Wren B.W."/>
            <person name="Holden M.T.G."/>
            <person name="Crossman L."/>
            <person name="Challis G.L."/>
            <person name="Churcher C."/>
            <person name="Mungall K."/>
            <person name="Brooks K."/>
            <person name="Chillingworth T."/>
            <person name="Feltwell T."/>
            <person name="Abdellah Z."/>
            <person name="Hauser H."/>
            <person name="Jagels K."/>
            <person name="Maddison M."/>
            <person name="Moule S."/>
            <person name="Sanders M."/>
            <person name="Whitehead S."/>
            <person name="Quail M.A."/>
            <person name="Dougan G."/>
            <person name="Parkhill J."/>
            <person name="Prentice M.B."/>
        </authorList>
    </citation>
    <scope>NUCLEOTIDE SEQUENCE [LARGE SCALE GENOMIC DNA]</scope>
    <source>
        <strain>NCTC 13174 / 8081</strain>
    </source>
</reference>
<evidence type="ECO:0000255" key="1">
    <source>
        <dbReference type="HAMAP-Rule" id="MF_01581"/>
    </source>
</evidence>
<evidence type="ECO:0000256" key="2">
    <source>
        <dbReference type="SAM" id="MobiDB-lite"/>
    </source>
</evidence>
<keyword id="KW-0732">Signal</keyword>
<proteinExistence type="inferred from homology"/>
<accession>A1JMQ5</accession>
<feature type="signal peptide" evidence="1">
    <location>
        <begin position="1"/>
        <end position="31"/>
    </location>
</feature>
<feature type="chain" id="PRO_5000201141" description="UPF0482 protein YE2026">
    <location>
        <begin position="32"/>
        <end position="123"/>
    </location>
</feature>
<feature type="region of interest" description="Disordered" evidence="2">
    <location>
        <begin position="47"/>
        <end position="66"/>
    </location>
</feature>
<protein>
    <recommendedName>
        <fullName evidence="1">UPF0482 protein YE2026</fullName>
    </recommendedName>
</protein>
<organism>
    <name type="scientific">Yersinia enterocolitica serotype O:8 / biotype 1B (strain NCTC 13174 / 8081)</name>
    <dbReference type="NCBI Taxonomy" id="393305"/>
    <lineage>
        <taxon>Bacteria</taxon>
        <taxon>Pseudomonadati</taxon>
        <taxon>Pseudomonadota</taxon>
        <taxon>Gammaproteobacteria</taxon>
        <taxon>Enterobacterales</taxon>
        <taxon>Yersiniaceae</taxon>
        <taxon>Yersinia</taxon>
    </lineage>
</organism>
<gene>
    <name type="ordered locus">YE2026</name>
</gene>
<sequence length="123" mass="13957">MKITSLPRLMRVFLPVAVLALPLAWQTAALAQSATCTQGSTCVSVGGNNDPMSKEQARQSQQQWDDTHRLRNKVNNRAEKNFDKYDRAEDAKDNCDRSANFNAYWEPNTERCLDRLSGRQINP</sequence>
<comment type="similarity">
    <text evidence="1">Belongs to the UPF0482 family.</text>
</comment>
<dbReference type="EMBL" id="AM286415">
    <property type="protein sequence ID" value="CAL12104.1"/>
    <property type="molecule type" value="Genomic_DNA"/>
</dbReference>
<dbReference type="RefSeq" id="WP_005169788.1">
    <property type="nucleotide sequence ID" value="NC_008800.1"/>
</dbReference>
<dbReference type="RefSeq" id="YP_001006277.1">
    <property type="nucleotide sequence ID" value="NC_008800.1"/>
</dbReference>
<dbReference type="KEGG" id="yen:YE2026"/>
<dbReference type="PATRIC" id="fig|393305.7.peg.2191"/>
<dbReference type="eggNOG" id="ENOG5032SRB">
    <property type="taxonomic scope" value="Bacteria"/>
</dbReference>
<dbReference type="HOGENOM" id="CLU_167574_0_0_6"/>
<dbReference type="OrthoDB" id="6455281at2"/>
<dbReference type="Proteomes" id="UP000000642">
    <property type="component" value="Chromosome"/>
</dbReference>
<dbReference type="HAMAP" id="MF_01581">
    <property type="entry name" value="UPF0482"/>
    <property type="match status" value="1"/>
</dbReference>
<dbReference type="InterPro" id="IPR009700">
    <property type="entry name" value="DUF1283"/>
</dbReference>
<dbReference type="NCBIfam" id="NF010180">
    <property type="entry name" value="PRK13659.1"/>
    <property type="match status" value="1"/>
</dbReference>
<dbReference type="Pfam" id="PF06932">
    <property type="entry name" value="DUF1283"/>
    <property type="match status" value="1"/>
</dbReference>